<evidence type="ECO:0000250" key="1"/>
<evidence type="ECO:0000250" key="2">
    <source>
        <dbReference type="UniProtKB" id="O50008"/>
    </source>
</evidence>
<evidence type="ECO:0000250" key="3">
    <source>
        <dbReference type="UniProtKB" id="P82610"/>
    </source>
</evidence>
<evidence type="ECO:0000305" key="4"/>
<gene>
    <name type="ordered locus">Os12g0623900</name>
    <name type="ordered locus">LOC_Os12g42876</name>
    <name type="ORF">OsJ_36926</name>
</gene>
<organism>
    <name type="scientific">Oryza sativa subsp. japonica</name>
    <name type="common">Rice</name>
    <dbReference type="NCBI Taxonomy" id="39947"/>
    <lineage>
        <taxon>Eukaryota</taxon>
        <taxon>Viridiplantae</taxon>
        <taxon>Streptophyta</taxon>
        <taxon>Embryophyta</taxon>
        <taxon>Tracheophyta</taxon>
        <taxon>Spermatophyta</taxon>
        <taxon>Magnoliopsida</taxon>
        <taxon>Liliopsida</taxon>
        <taxon>Poales</taxon>
        <taxon>Poaceae</taxon>
        <taxon>BOP clade</taxon>
        <taxon>Oryzoideae</taxon>
        <taxon>Oryzeae</taxon>
        <taxon>Oryzinae</taxon>
        <taxon>Oryza</taxon>
        <taxon>Oryza sativa</taxon>
    </lineage>
</organism>
<sequence length="766" mass="84585">MASHIVGYPRMGPKRELKFALESFWDGKSSAEDLEKVATDLRASIWKQMADAGIKYIPSNTFSYYDQVLDTAAMLGAVPERYSWTGGEIGFSTYFSMARGNATVPAMEMTKWFDTNYHFIVPELGPNTKFSYSSHKAVNEYKEAKALGVDTVPVLVGPVSYLLLSKPAKGVEKSFALLSLLSSILPVYKEVIAELKAAGATWIQFDEPTLVLDLDSHQLAAFSAAYTELESALSGLNVLIETYFADIPAESYKTLTSLNSVTAYGFDLIRGAKTLDLIKSAGFPSGKYLFAGVVDGRNIWADDLAASLTTLESLEAIVGKDKLVVSTSCSLMHTAVDLVNETKLDSEIKSWLAFAAQKVVEVNALAKALAGQKDEAYFAANAAAQASRRSSPRVTNEEVQKAAAALKGSDHRRATNVSARLDAQQKKLNLPVLPTTTIGSFPQTVELRRVRREYKAKKISEEEYISAIKEEISKVVKIQEELDIDVLVHGEPERNDMVEYFGEQLSGFAFTANGWVQSYGSRCVKPPIIYGDVSRPNPMTVFWSKLAQSMTSRPMKGMLTGPVTILNWSFVRNDQPRFETCYQIALAIKKEVEDLEAGGIQVIQIDEAALREGLPLRKAEHAFYLDWAVHSFRITNCGVQDTTQIHTHMCYSNFNDIIHSIINMDADVITIENSRSDEKLLSVFREGVKYGAGIGPGVYDIHSPRIPSTEEIADRVNKMLAVLDTNILWVNPDCGLKTRKYNEVKPALTNMVSAAKLIRTQLASAK</sequence>
<proteinExistence type="evidence at transcript level"/>
<keyword id="KW-0028">Amino-acid biosynthesis</keyword>
<keyword id="KW-0963">Cytoplasm</keyword>
<keyword id="KW-0479">Metal-binding</keyword>
<keyword id="KW-0486">Methionine biosynthesis</keyword>
<keyword id="KW-0489">Methyltransferase</keyword>
<keyword id="KW-1185">Reference proteome</keyword>
<keyword id="KW-0808">Transferase</keyword>
<keyword id="KW-0862">Zinc</keyword>
<feature type="chain" id="PRO_0000424358" description="5-methyltetrahydropteroyltriglutamate--homocysteine methyltransferase 1">
    <location>
        <begin position="1"/>
        <end position="766"/>
    </location>
</feature>
<feature type="active site" description="Proton donor" evidence="3">
    <location>
        <position position="702"/>
    </location>
</feature>
<feature type="binding site" evidence="3">
    <location>
        <position position="18"/>
    </location>
    <ligand>
        <name>5-methyltetrahydropteroyltri-L-glutamate</name>
        <dbReference type="ChEBI" id="CHEBI:58207"/>
    </ligand>
</feature>
<feature type="binding site" evidence="3">
    <location>
        <position position="116"/>
    </location>
    <ligand>
        <name>5-methyltetrahydropteroyltri-L-glutamate</name>
        <dbReference type="ChEBI" id="CHEBI:58207"/>
    </ligand>
</feature>
<feature type="binding site" evidence="3">
    <location>
        <begin position="438"/>
        <end position="440"/>
    </location>
    <ligand>
        <name>L-homocysteine</name>
        <dbReference type="ChEBI" id="CHEBI:58199"/>
    </ligand>
</feature>
<feature type="binding site" evidence="3">
    <location>
        <begin position="438"/>
        <end position="440"/>
    </location>
    <ligand>
        <name>L-methionine</name>
        <dbReference type="ChEBI" id="CHEBI:57844"/>
    </ligand>
</feature>
<feature type="binding site" evidence="3">
    <location>
        <position position="491"/>
    </location>
    <ligand>
        <name>L-homocysteine</name>
        <dbReference type="ChEBI" id="CHEBI:58199"/>
    </ligand>
</feature>
<feature type="binding site" evidence="3">
    <location>
        <position position="491"/>
    </location>
    <ligand>
        <name>L-methionine</name>
        <dbReference type="ChEBI" id="CHEBI:57844"/>
    </ligand>
</feature>
<feature type="binding site" evidence="3">
    <location>
        <position position="496"/>
    </location>
    <ligand>
        <name>5-methyltetrahydropteroyltri-L-glutamate</name>
        <dbReference type="ChEBI" id="CHEBI:58207"/>
    </ligand>
</feature>
<feature type="binding site" evidence="3">
    <location>
        <position position="519"/>
    </location>
    <ligand>
        <name>5-methyltetrahydropteroyltri-L-glutamate</name>
        <dbReference type="ChEBI" id="CHEBI:58207"/>
    </ligand>
</feature>
<feature type="binding site" evidence="2">
    <location>
        <begin position="522"/>
        <end position="523"/>
    </location>
    <ligand>
        <name>5-methyltetrahydropteroyltri-L-glutamate</name>
        <dbReference type="ChEBI" id="CHEBI:58207"/>
    </ligand>
</feature>
<feature type="binding site" evidence="3">
    <location>
        <position position="568"/>
    </location>
    <ligand>
        <name>5-methyltetrahydropteroyltri-L-glutamate</name>
        <dbReference type="ChEBI" id="CHEBI:58207"/>
    </ligand>
</feature>
<feature type="binding site" evidence="3">
    <location>
        <position position="606"/>
    </location>
    <ligand>
        <name>L-homocysteine</name>
        <dbReference type="ChEBI" id="CHEBI:58199"/>
    </ligand>
</feature>
<feature type="binding site" evidence="3">
    <location>
        <position position="606"/>
    </location>
    <ligand>
        <name>L-methionine</name>
        <dbReference type="ChEBI" id="CHEBI:57844"/>
    </ligand>
</feature>
<feature type="binding site" evidence="2">
    <location>
        <position position="648"/>
    </location>
    <ligand>
        <name>Zn(2+)</name>
        <dbReference type="ChEBI" id="CHEBI:29105"/>
        <label>1</label>
        <note>catalytic</note>
    </ligand>
</feature>
<feature type="binding site" evidence="2">
    <location>
        <position position="650"/>
    </location>
    <ligand>
        <name>Zn(2+)</name>
        <dbReference type="ChEBI" id="CHEBI:29105"/>
        <label>1</label>
        <note>catalytic</note>
    </ligand>
</feature>
<feature type="binding site" evidence="2">
    <location>
        <position position="659"/>
    </location>
    <ligand>
        <name>Zn(2+)</name>
        <dbReference type="ChEBI" id="CHEBI:29105"/>
        <label>2</label>
    </ligand>
</feature>
<feature type="binding site" evidence="3">
    <location>
        <position position="672"/>
    </location>
    <ligand>
        <name>Zn(2+)</name>
        <dbReference type="ChEBI" id="CHEBI:29105"/>
        <label>1</label>
        <note>catalytic</note>
    </ligand>
</feature>
<feature type="binding site" evidence="2">
    <location>
        <position position="734"/>
    </location>
    <ligand>
        <name>Zn(2+)</name>
        <dbReference type="ChEBI" id="CHEBI:29105"/>
        <label>1</label>
        <note>catalytic</note>
    </ligand>
</feature>
<protein>
    <recommendedName>
        <fullName>5-methyltetrahydropteroyltriglutamate--homocysteine methyltransferase 1</fullName>
        <ecNumber>2.1.1.14</ecNumber>
    </recommendedName>
    <alternativeName>
        <fullName>Cobalamin-independent methionine synthase 1</fullName>
    </alternativeName>
</protein>
<comment type="function">
    <text evidence="1">Catalyzes the transfer of a methyl group from 5-methyltetrahydrofolate to homocysteine resulting in methionine formation.</text>
</comment>
<comment type="catalytic activity">
    <reaction>
        <text>5-methyltetrahydropteroyltri-L-glutamate + L-homocysteine = tetrahydropteroyltri-L-glutamate + L-methionine</text>
        <dbReference type="Rhea" id="RHEA:21196"/>
        <dbReference type="ChEBI" id="CHEBI:57844"/>
        <dbReference type="ChEBI" id="CHEBI:58140"/>
        <dbReference type="ChEBI" id="CHEBI:58199"/>
        <dbReference type="ChEBI" id="CHEBI:58207"/>
        <dbReference type="EC" id="2.1.1.14"/>
    </reaction>
</comment>
<comment type="cofactor">
    <cofactor evidence="1">
        <name>Zn(2+)</name>
        <dbReference type="ChEBI" id="CHEBI:29105"/>
    </cofactor>
    <text evidence="1">Binds 2 Zn(2+) ions per subunit.</text>
</comment>
<comment type="pathway">
    <text>Amino-acid biosynthesis; L-methionine biosynthesis via de novo pathway; L-methionine from L-homocysteine (MetE route): step 1/1.</text>
</comment>
<comment type="subcellular location">
    <subcellularLocation>
        <location evidence="1">Cytoplasm</location>
        <location evidence="1">Cytosol</location>
    </subcellularLocation>
</comment>
<comment type="similarity">
    <text evidence="4">Belongs to the vitamin-B12 independent methionine synthase family.</text>
</comment>
<dbReference type="EC" id="2.1.1.14"/>
<dbReference type="EMBL" id="JN944358">
    <property type="protein sequence ID" value="AFI71269.1"/>
    <property type="molecule type" value="mRNA"/>
</dbReference>
<dbReference type="EMBL" id="DP000011">
    <property type="protein sequence ID" value="ABA99427.1"/>
    <property type="molecule type" value="Genomic_DNA"/>
</dbReference>
<dbReference type="EMBL" id="DP000011">
    <property type="protein sequence ID" value="ABG22094.1"/>
    <property type="molecule type" value="Genomic_DNA"/>
</dbReference>
<dbReference type="EMBL" id="AP008218">
    <property type="protein sequence ID" value="BAF30332.1"/>
    <property type="molecule type" value="Genomic_DNA"/>
</dbReference>
<dbReference type="EMBL" id="AP014968">
    <property type="protein sequence ID" value="BAT18160.1"/>
    <property type="molecule type" value="Genomic_DNA"/>
</dbReference>
<dbReference type="EMBL" id="CM000149">
    <property type="protein sequence ID" value="EAZ21274.1"/>
    <property type="molecule type" value="Genomic_DNA"/>
</dbReference>
<dbReference type="EMBL" id="AK099069">
    <property type="status" value="NOT_ANNOTATED_CDS"/>
    <property type="molecule type" value="mRNA"/>
</dbReference>
<dbReference type="RefSeq" id="XP_015619819.1">
    <property type="nucleotide sequence ID" value="XM_015764333.1"/>
</dbReference>
<dbReference type="SMR" id="Q2QLY5"/>
<dbReference type="FunCoup" id="Q2QLY5">
    <property type="interactions" value="1328"/>
</dbReference>
<dbReference type="STRING" id="39947.Q2QLY5"/>
<dbReference type="CarbonylDB" id="Q2QLY5"/>
<dbReference type="PaxDb" id="39947-Q2QLY5"/>
<dbReference type="EnsemblPlants" id="Os12t0623900-01">
    <property type="protein sequence ID" value="Os12t0623900-01"/>
    <property type="gene ID" value="Os12g0623900"/>
</dbReference>
<dbReference type="Gramene" id="Os12t0623900-01">
    <property type="protein sequence ID" value="Os12t0623900-01"/>
    <property type="gene ID" value="Os12g0623900"/>
</dbReference>
<dbReference type="KEGG" id="dosa:Os12g0623900"/>
<dbReference type="eggNOG" id="KOG2263">
    <property type="taxonomic scope" value="Eukaryota"/>
</dbReference>
<dbReference type="HOGENOM" id="CLU_013175_0_0_1"/>
<dbReference type="InParanoid" id="Q2QLY5"/>
<dbReference type="OMA" id="TCVQLDE"/>
<dbReference type="OrthoDB" id="1053771at2759"/>
<dbReference type="PlantReactome" id="R-OSA-1119400">
    <property type="pathway name" value="Methionine biosynthesis II"/>
</dbReference>
<dbReference type="PlantReactome" id="R-OSA-1119501">
    <property type="pathway name" value="S-adenosyl-L-methionine cycle"/>
</dbReference>
<dbReference type="UniPathway" id="UPA00051">
    <property type="reaction ID" value="UER00082"/>
</dbReference>
<dbReference type="Proteomes" id="UP000000763">
    <property type="component" value="Chromosome 12"/>
</dbReference>
<dbReference type="Proteomes" id="UP000007752">
    <property type="component" value="Chromosome 12"/>
</dbReference>
<dbReference type="Proteomes" id="UP000059680">
    <property type="component" value="Chromosome 12"/>
</dbReference>
<dbReference type="ExpressionAtlas" id="Q2QLY5">
    <property type="expression patterns" value="baseline and differential"/>
</dbReference>
<dbReference type="GO" id="GO:0005829">
    <property type="term" value="C:cytosol"/>
    <property type="evidence" value="ECO:0007669"/>
    <property type="project" value="UniProtKB-SubCell"/>
</dbReference>
<dbReference type="GO" id="GO:0003871">
    <property type="term" value="F:5-methyltetrahydropteroyltriglutamate-homocysteine S-methyltransferase activity"/>
    <property type="evidence" value="ECO:0007669"/>
    <property type="project" value="UniProtKB-EC"/>
</dbReference>
<dbReference type="GO" id="GO:0008270">
    <property type="term" value="F:zinc ion binding"/>
    <property type="evidence" value="ECO:0007669"/>
    <property type="project" value="InterPro"/>
</dbReference>
<dbReference type="GO" id="GO:0009086">
    <property type="term" value="P:methionine biosynthetic process"/>
    <property type="evidence" value="ECO:0007669"/>
    <property type="project" value="UniProtKB-KW"/>
</dbReference>
<dbReference type="GO" id="GO:0032259">
    <property type="term" value="P:methylation"/>
    <property type="evidence" value="ECO:0007669"/>
    <property type="project" value="UniProtKB-KW"/>
</dbReference>
<dbReference type="CDD" id="cd03311">
    <property type="entry name" value="CIMS_C_terminal_like"/>
    <property type="match status" value="1"/>
</dbReference>
<dbReference type="CDD" id="cd03312">
    <property type="entry name" value="CIMS_N_terminal_like"/>
    <property type="match status" value="1"/>
</dbReference>
<dbReference type="FunFam" id="3.20.20.210:FF:000002">
    <property type="entry name" value="5-methyltetrahydropteroyltriglutamate--homocysteine methyltransferase"/>
    <property type="match status" value="1"/>
</dbReference>
<dbReference type="FunFam" id="3.20.20.210:FF:000003">
    <property type="entry name" value="5-methyltetrahydropteroyltriglutamate--homocysteine methyltransferase"/>
    <property type="match status" value="1"/>
</dbReference>
<dbReference type="Gene3D" id="3.20.20.210">
    <property type="match status" value="2"/>
</dbReference>
<dbReference type="HAMAP" id="MF_00172">
    <property type="entry name" value="Meth_synth"/>
    <property type="match status" value="1"/>
</dbReference>
<dbReference type="InterPro" id="IPR013215">
    <property type="entry name" value="Cbl-indep_Met_Synth_N"/>
</dbReference>
<dbReference type="InterPro" id="IPR006276">
    <property type="entry name" value="Cobalamin-indep_Met_synthase"/>
</dbReference>
<dbReference type="InterPro" id="IPR002629">
    <property type="entry name" value="Met_Synth_C/arc"/>
</dbReference>
<dbReference type="InterPro" id="IPR038071">
    <property type="entry name" value="UROD/MetE-like_sf"/>
</dbReference>
<dbReference type="NCBIfam" id="TIGR01371">
    <property type="entry name" value="met_syn_B12ind"/>
    <property type="match status" value="1"/>
</dbReference>
<dbReference type="NCBIfam" id="NF003556">
    <property type="entry name" value="PRK05222.1"/>
    <property type="match status" value="1"/>
</dbReference>
<dbReference type="PANTHER" id="PTHR30519">
    <property type="entry name" value="5-METHYLTETRAHYDROPTEROYLTRIGLUTAMATE--HOMOCYSTEINE METHYLTRANSFERASE"/>
    <property type="match status" value="1"/>
</dbReference>
<dbReference type="Pfam" id="PF08267">
    <property type="entry name" value="Meth_synt_1"/>
    <property type="match status" value="1"/>
</dbReference>
<dbReference type="Pfam" id="PF01717">
    <property type="entry name" value="Meth_synt_2"/>
    <property type="match status" value="1"/>
</dbReference>
<dbReference type="PIRSF" id="PIRSF000382">
    <property type="entry name" value="MeTrfase_B12_ind"/>
    <property type="match status" value="1"/>
</dbReference>
<dbReference type="SUPFAM" id="SSF51726">
    <property type="entry name" value="UROD/MetE-like"/>
    <property type="match status" value="2"/>
</dbReference>
<accession>Q2QLY5</accession>
<accession>A0A0P0YCU9</accession>
<name>METE1_ORYSJ</name>
<reference key="1">
    <citation type="submission" date="2011-10" db="EMBL/GenBank/DDBJ databases">
        <title>Structural and expression analysis of immature seed genes in Oryza sativa L.</title>
        <authorList>
            <person name="Yoon U.H."/>
        </authorList>
    </citation>
    <scope>NUCLEOTIDE SEQUENCE [MRNA]</scope>
    <source>
        <strain>cv. Ilpoombyeo</strain>
        <tissue>Immature seed</tissue>
    </source>
</reference>
<reference key="2">
    <citation type="journal article" date="2005" name="BMC Biol.">
        <title>The sequence of rice chromosomes 11 and 12, rich in disease resistance genes and recent gene duplications.</title>
        <authorList>
            <consortium name="The rice chromosomes 11 and 12 sequencing consortia"/>
        </authorList>
    </citation>
    <scope>NUCLEOTIDE SEQUENCE [LARGE SCALE GENOMIC DNA]</scope>
    <source>
        <strain>cv. Nipponbare</strain>
    </source>
</reference>
<reference key="3">
    <citation type="journal article" date="2005" name="Nature">
        <title>The map-based sequence of the rice genome.</title>
        <authorList>
            <consortium name="International rice genome sequencing project (IRGSP)"/>
        </authorList>
    </citation>
    <scope>NUCLEOTIDE SEQUENCE [LARGE SCALE GENOMIC DNA]</scope>
    <source>
        <strain>cv. Nipponbare</strain>
    </source>
</reference>
<reference key="4">
    <citation type="journal article" date="2008" name="Nucleic Acids Res.">
        <title>The rice annotation project database (RAP-DB): 2008 update.</title>
        <authorList>
            <consortium name="The rice annotation project (RAP)"/>
        </authorList>
    </citation>
    <scope>GENOME REANNOTATION</scope>
    <source>
        <strain>cv. Nipponbare</strain>
    </source>
</reference>
<reference key="5">
    <citation type="journal article" date="2013" name="Rice">
        <title>Improvement of the Oryza sativa Nipponbare reference genome using next generation sequence and optical map data.</title>
        <authorList>
            <person name="Kawahara Y."/>
            <person name="de la Bastide M."/>
            <person name="Hamilton J.P."/>
            <person name="Kanamori H."/>
            <person name="McCombie W.R."/>
            <person name="Ouyang S."/>
            <person name="Schwartz D.C."/>
            <person name="Tanaka T."/>
            <person name="Wu J."/>
            <person name="Zhou S."/>
            <person name="Childs K.L."/>
            <person name="Davidson R.M."/>
            <person name="Lin H."/>
            <person name="Quesada-Ocampo L."/>
            <person name="Vaillancourt B."/>
            <person name="Sakai H."/>
            <person name="Lee S.S."/>
            <person name="Kim J."/>
            <person name="Numa H."/>
            <person name="Itoh T."/>
            <person name="Buell C.R."/>
            <person name="Matsumoto T."/>
        </authorList>
    </citation>
    <scope>GENOME REANNOTATION</scope>
    <source>
        <strain>cv. Nipponbare</strain>
    </source>
</reference>
<reference key="6">
    <citation type="journal article" date="2005" name="PLoS Biol.">
        <title>The genomes of Oryza sativa: a history of duplications.</title>
        <authorList>
            <person name="Yu J."/>
            <person name="Wang J."/>
            <person name="Lin W."/>
            <person name="Li S."/>
            <person name="Li H."/>
            <person name="Zhou J."/>
            <person name="Ni P."/>
            <person name="Dong W."/>
            <person name="Hu S."/>
            <person name="Zeng C."/>
            <person name="Zhang J."/>
            <person name="Zhang Y."/>
            <person name="Li R."/>
            <person name="Xu Z."/>
            <person name="Li S."/>
            <person name="Li X."/>
            <person name="Zheng H."/>
            <person name="Cong L."/>
            <person name="Lin L."/>
            <person name="Yin J."/>
            <person name="Geng J."/>
            <person name="Li G."/>
            <person name="Shi J."/>
            <person name="Liu J."/>
            <person name="Lv H."/>
            <person name="Li J."/>
            <person name="Wang J."/>
            <person name="Deng Y."/>
            <person name="Ran L."/>
            <person name="Shi X."/>
            <person name="Wang X."/>
            <person name="Wu Q."/>
            <person name="Li C."/>
            <person name="Ren X."/>
            <person name="Wang J."/>
            <person name="Wang X."/>
            <person name="Li D."/>
            <person name="Liu D."/>
            <person name="Zhang X."/>
            <person name="Ji Z."/>
            <person name="Zhao W."/>
            <person name="Sun Y."/>
            <person name="Zhang Z."/>
            <person name="Bao J."/>
            <person name="Han Y."/>
            <person name="Dong L."/>
            <person name="Ji J."/>
            <person name="Chen P."/>
            <person name="Wu S."/>
            <person name="Liu J."/>
            <person name="Xiao Y."/>
            <person name="Bu D."/>
            <person name="Tan J."/>
            <person name="Yang L."/>
            <person name="Ye C."/>
            <person name="Zhang J."/>
            <person name="Xu J."/>
            <person name="Zhou Y."/>
            <person name="Yu Y."/>
            <person name="Zhang B."/>
            <person name="Zhuang S."/>
            <person name="Wei H."/>
            <person name="Liu B."/>
            <person name="Lei M."/>
            <person name="Yu H."/>
            <person name="Li Y."/>
            <person name="Xu H."/>
            <person name="Wei S."/>
            <person name="He X."/>
            <person name="Fang L."/>
            <person name="Zhang Z."/>
            <person name="Zhang Y."/>
            <person name="Huang X."/>
            <person name="Su Z."/>
            <person name="Tong W."/>
            <person name="Li J."/>
            <person name="Tong Z."/>
            <person name="Li S."/>
            <person name="Ye J."/>
            <person name="Wang L."/>
            <person name="Fang L."/>
            <person name="Lei T."/>
            <person name="Chen C.-S."/>
            <person name="Chen H.-C."/>
            <person name="Xu Z."/>
            <person name="Li H."/>
            <person name="Huang H."/>
            <person name="Zhang F."/>
            <person name="Xu H."/>
            <person name="Li N."/>
            <person name="Zhao C."/>
            <person name="Li S."/>
            <person name="Dong L."/>
            <person name="Huang Y."/>
            <person name="Li L."/>
            <person name="Xi Y."/>
            <person name="Qi Q."/>
            <person name="Li W."/>
            <person name="Zhang B."/>
            <person name="Hu W."/>
            <person name="Zhang Y."/>
            <person name="Tian X."/>
            <person name="Jiao Y."/>
            <person name="Liang X."/>
            <person name="Jin J."/>
            <person name="Gao L."/>
            <person name="Zheng W."/>
            <person name="Hao B."/>
            <person name="Liu S.-M."/>
            <person name="Wang W."/>
            <person name="Yuan L."/>
            <person name="Cao M."/>
            <person name="McDermott J."/>
            <person name="Samudrala R."/>
            <person name="Wang J."/>
            <person name="Wong G.K.-S."/>
            <person name="Yang H."/>
        </authorList>
    </citation>
    <scope>NUCLEOTIDE SEQUENCE [LARGE SCALE GENOMIC DNA]</scope>
    <source>
        <strain>cv. Nipponbare</strain>
    </source>
</reference>
<reference key="7">
    <citation type="journal article" date="2003" name="Science">
        <title>Collection, mapping, and annotation of over 28,000 cDNA clones from japonica rice.</title>
        <authorList>
            <consortium name="The rice full-length cDNA consortium"/>
        </authorList>
    </citation>
    <scope>NUCLEOTIDE SEQUENCE [LARGE SCALE MRNA]</scope>
    <source>
        <strain>cv. Nipponbare</strain>
    </source>
</reference>